<gene>
    <name evidence="1" type="primary">aroB</name>
    <name type="ordered locus">Shal_4081</name>
</gene>
<protein>
    <recommendedName>
        <fullName evidence="1">3-dehydroquinate synthase</fullName>
        <shortName evidence="1">DHQS</shortName>
        <ecNumber evidence="1">4.2.3.4</ecNumber>
    </recommendedName>
</protein>
<accession>B0TL76</accession>
<organism>
    <name type="scientific">Shewanella halifaxensis (strain HAW-EB4)</name>
    <dbReference type="NCBI Taxonomy" id="458817"/>
    <lineage>
        <taxon>Bacteria</taxon>
        <taxon>Pseudomonadati</taxon>
        <taxon>Pseudomonadota</taxon>
        <taxon>Gammaproteobacteria</taxon>
        <taxon>Alteromonadales</taxon>
        <taxon>Shewanellaceae</taxon>
        <taxon>Shewanella</taxon>
    </lineage>
</organism>
<sequence length="359" mass="39323">MTKQVLVELGERSYPIEIGQNLFSNSEPLARYLQHKNILIVTNETIAPLYLQSVEAMLSDFACATPVILPDGEQYKTLEQMNAIFTSLLEQNLGRDTVLIALGGGVIGDMTGFAAASYQRGVDFIQIPTTLLSQVDSSVGGKTAVNHPLGKNMIGAFYQPKCVLIDTNCLSTLPKREFAAGMAEVIKYGVIWDAEFFQWLENNVEALKSLDTQALEYAISRCCEIKAEVVEKDETEQAVRALLNLGHTFGHAIEAEMGYGVWLHGEAVSAGTVLAAMTSNKLGLVDESIVCRITALLAAFDLPITAPETMDFEQFIKHMRRDKKVLKGQLRLVLPEGIGQAGIYSDVTDELLEEVINCA</sequence>
<comment type="function">
    <text evidence="1">Catalyzes the conversion of 3-deoxy-D-arabino-heptulosonate 7-phosphate (DAHP) to dehydroquinate (DHQ).</text>
</comment>
<comment type="catalytic activity">
    <reaction evidence="1">
        <text>7-phospho-2-dehydro-3-deoxy-D-arabino-heptonate = 3-dehydroquinate + phosphate</text>
        <dbReference type="Rhea" id="RHEA:21968"/>
        <dbReference type="ChEBI" id="CHEBI:32364"/>
        <dbReference type="ChEBI" id="CHEBI:43474"/>
        <dbReference type="ChEBI" id="CHEBI:58394"/>
        <dbReference type="EC" id="4.2.3.4"/>
    </reaction>
</comment>
<comment type="cofactor">
    <cofactor evidence="1">
        <name>Co(2+)</name>
        <dbReference type="ChEBI" id="CHEBI:48828"/>
    </cofactor>
    <cofactor evidence="1">
        <name>Zn(2+)</name>
        <dbReference type="ChEBI" id="CHEBI:29105"/>
    </cofactor>
    <text evidence="1">Binds 1 divalent metal cation per subunit. Can use either Co(2+) or Zn(2+).</text>
</comment>
<comment type="cofactor">
    <cofactor evidence="1">
        <name>NAD(+)</name>
        <dbReference type="ChEBI" id="CHEBI:57540"/>
    </cofactor>
</comment>
<comment type="pathway">
    <text evidence="1">Metabolic intermediate biosynthesis; chorismate biosynthesis; chorismate from D-erythrose 4-phosphate and phosphoenolpyruvate: step 2/7.</text>
</comment>
<comment type="subcellular location">
    <subcellularLocation>
        <location evidence="1">Cytoplasm</location>
    </subcellularLocation>
</comment>
<comment type="similarity">
    <text evidence="1">Belongs to the sugar phosphate cyclases superfamily. Dehydroquinate synthase family.</text>
</comment>
<reference key="1">
    <citation type="submission" date="2008-01" db="EMBL/GenBank/DDBJ databases">
        <title>Complete sequence of Shewanella halifaxensis HAW-EB4.</title>
        <authorList>
            <consortium name="US DOE Joint Genome Institute"/>
            <person name="Copeland A."/>
            <person name="Lucas S."/>
            <person name="Lapidus A."/>
            <person name="Glavina del Rio T."/>
            <person name="Dalin E."/>
            <person name="Tice H."/>
            <person name="Bruce D."/>
            <person name="Goodwin L."/>
            <person name="Pitluck S."/>
            <person name="Sims D."/>
            <person name="Brettin T."/>
            <person name="Detter J.C."/>
            <person name="Han C."/>
            <person name="Kuske C.R."/>
            <person name="Schmutz J."/>
            <person name="Larimer F."/>
            <person name="Land M."/>
            <person name="Hauser L."/>
            <person name="Kyrpides N."/>
            <person name="Kim E."/>
            <person name="Zhao J.-S."/>
            <person name="Richardson P."/>
        </authorList>
    </citation>
    <scope>NUCLEOTIDE SEQUENCE [LARGE SCALE GENOMIC DNA]</scope>
    <source>
        <strain>HAW-EB4</strain>
    </source>
</reference>
<proteinExistence type="inferred from homology"/>
<dbReference type="EC" id="4.2.3.4" evidence="1"/>
<dbReference type="EMBL" id="CP000931">
    <property type="protein sequence ID" value="ABZ78621.1"/>
    <property type="molecule type" value="Genomic_DNA"/>
</dbReference>
<dbReference type="RefSeq" id="WP_012279138.1">
    <property type="nucleotide sequence ID" value="NC_010334.1"/>
</dbReference>
<dbReference type="SMR" id="B0TL76"/>
<dbReference type="STRING" id="458817.Shal_4081"/>
<dbReference type="KEGG" id="shl:Shal_4081"/>
<dbReference type="eggNOG" id="COG0337">
    <property type="taxonomic scope" value="Bacteria"/>
</dbReference>
<dbReference type="HOGENOM" id="CLU_001201_0_2_6"/>
<dbReference type="OrthoDB" id="9806583at2"/>
<dbReference type="UniPathway" id="UPA00053">
    <property type="reaction ID" value="UER00085"/>
</dbReference>
<dbReference type="Proteomes" id="UP000001317">
    <property type="component" value="Chromosome"/>
</dbReference>
<dbReference type="GO" id="GO:0005737">
    <property type="term" value="C:cytoplasm"/>
    <property type="evidence" value="ECO:0007669"/>
    <property type="project" value="UniProtKB-SubCell"/>
</dbReference>
<dbReference type="GO" id="GO:0003856">
    <property type="term" value="F:3-dehydroquinate synthase activity"/>
    <property type="evidence" value="ECO:0007669"/>
    <property type="project" value="UniProtKB-UniRule"/>
</dbReference>
<dbReference type="GO" id="GO:0046872">
    <property type="term" value="F:metal ion binding"/>
    <property type="evidence" value="ECO:0007669"/>
    <property type="project" value="UniProtKB-KW"/>
</dbReference>
<dbReference type="GO" id="GO:0000166">
    <property type="term" value="F:nucleotide binding"/>
    <property type="evidence" value="ECO:0007669"/>
    <property type="project" value="UniProtKB-KW"/>
</dbReference>
<dbReference type="GO" id="GO:0008652">
    <property type="term" value="P:amino acid biosynthetic process"/>
    <property type="evidence" value="ECO:0007669"/>
    <property type="project" value="UniProtKB-KW"/>
</dbReference>
<dbReference type="GO" id="GO:0009073">
    <property type="term" value="P:aromatic amino acid family biosynthetic process"/>
    <property type="evidence" value="ECO:0007669"/>
    <property type="project" value="UniProtKB-KW"/>
</dbReference>
<dbReference type="GO" id="GO:0009423">
    <property type="term" value="P:chorismate biosynthetic process"/>
    <property type="evidence" value="ECO:0007669"/>
    <property type="project" value="UniProtKB-UniRule"/>
</dbReference>
<dbReference type="CDD" id="cd08195">
    <property type="entry name" value="DHQS"/>
    <property type="match status" value="1"/>
</dbReference>
<dbReference type="FunFam" id="1.20.1090.10:FF:000002">
    <property type="entry name" value="3-dehydroquinate synthase"/>
    <property type="match status" value="1"/>
</dbReference>
<dbReference type="FunFam" id="3.40.50.1970:FF:000001">
    <property type="entry name" value="3-dehydroquinate synthase"/>
    <property type="match status" value="1"/>
</dbReference>
<dbReference type="Gene3D" id="3.40.50.1970">
    <property type="match status" value="1"/>
</dbReference>
<dbReference type="Gene3D" id="1.20.1090.10">
    <property type="entry name" value="Dehydroquinate synthase-like - alpha domain"/>
    <property type="match status" value="1"/>
</dbReference>
<dbReference type="HAMAP" id="MF_00110">
    <property type="entry name" value="DHQ_synthase"/>
    <property type="match status" value="1"/>
</dbReference>
<dbReference type="InterPro" id="IPR050071">
    <property type="entry name" value="Dehydroquinate_synthase"/>
</dbReference>
<dbReference type="InterPro" id="IPR016037">
    <property type="entry name" value="DHQ_synth_AroB"/>
</dbReference>
<dbReference type="InterPro" id="IPR030963">
    <property type="entry name" value="DHQ_synth_fam"/>
</dbReference>
<dbReference type="InterPro" id="IPR030960">
    <property type="entry name" value="DHQS/DOIS_N"/>
</dbReference>
<dbReference type="InterPro" id="IPR056179">
    <property type="entry name" value="DHQS_C"/>
</dbReference>
<dbReference type="NCBIfam" id="TIGR01357">
    <property type="entry name" value="aroB"/>
    <property type="match status" value="1"/>
</dbReference>
<dbReference type="PANTHER" id="PTHR43622">
    <property type="entry name" value="3-DEHYDROQUINATE SYNTHASE"/>
    <property type="match status" value="1"/>
</dbReference>
<dbReference type="PANTHER" id="PTHR43622:SF7">
    <property type="entry name" value="3-DEHYDROQUINATE SYNTHASE, CHLOROPLASTIC"/>
    <property type="match status" value="1"/>
</dbReference>
<dbReference type="Pfam" id="PF01761">
    <property type="entry name" value="DHQ_synthase"/>
    <property type="match status" value="1"/>
</dbReference>
<dbReference type="Pfam" id="PF24621">
    <property type="entry name" value="DHQS_C"/>
    <property type="match status" value="1"/>
</dbReference>
<dbReference type="PIRSF" id="PIRSF001455">
    <property type="entry name" value="DHQ_synth"/>
    <property type="match status" value="1"/>
</dbReference>
<dbReference type="SUPFAM" id="SSF56796">
    <property type="entry name" value="Dehydroquinate synthase-like"/>
    <property type="match status" value="1"/>
</dbReference>
<feature type="chain" id="PRO_1000094611" description="3-dehydroquinate synthase">
    <location>
        <begin position="1"/>
        <end position="359"/>
    </location>
</feature>
<feature type="binding site" evidence="1">
    <location>
        <begin position="71"/>
        <end position="76"/>
    </location>
    <ligand>
        <name>NAD(+)</name>
        <dbReference type="ChEBI" id="CHEBI:57540"/>
    </ligand>
</feature>
<feature type="binding site" evidence="1">
    <location>
        <begin position="105"/>
        <end position="109"/>
    </location>
    <ligand>
        <name>NAD(+)</name>
        <dbReference type="ChEBI" id="CHEBI:57540"/>
    </ligand>
</feature>
<feature type="binding site" evidence="1">
    <location>
        <begin position="129"/>
        <end position="130"/>
    </location>
    <ligand>
        <name>NAD(+)</name>
        <dbReference type="ChEBI" id="CHEBI:57540"/>
    </ligand>
</feature>
<feature type="binding site" evidence="1">
    <location>
        <position position="142"/>
    </location>
    <ligand>
        <name>NAD(+)</name>
        <dbReference type="ChEBI" id="CHEBI:57540"/>
    </ligand>
</feature>
<feature type="binding site" evidence="1">
    <location>
        <position position="151"/>
    </location>
    <ligand>
        <name>NAD(+)</name>
        <dbReference type="ChEBI" id="CHEBI:57540"/>
    </ligand>
</feature>
<feature type="binding site" evidence="1">
    <location>
        <begin position="169"/>
        <end position="172"/>
    </location>
    <ligand>
        <name>NAD(+)</name>
        <dbReference type="ChEBI" id="CHEBI:57540"/>
    </ligand>
</feature>
<feature type="binding site" evidence="1">
    <location>
        <position position="184"/>
    </location>
    <ligand>
        <name>Zn(2+)</name>
        <dbReference type="ChEBI" id="CHEBI:29105"/>
    </ligand>
</feature>
<feature type="binding site" evidence="1">
    <location>
        <position position="247"/>
    </location>
    <ligand>
        <name>Zn(2+)</name>
        <dbReference type="ChEBI" id="CHEBI:29105"/>
    </ligand>
</feature>
<feature type="binding site" evidence="1">
    <location>
        <position position="264"/>
    </location>
    <ligand>
        <name>Zn(2+)</name>
        <dbReference type="ChEBI" id="CHEBI:29105"/>
    </ligand>
</feature>
<name>AROB_SHEHH</name>
<evidence type="ECO:0000255" key="1">
    <source>
        <dbReference type="HAMAP-Rule" id="MF_00110"/>
    </source>
</evidence>
<keyword id="KW-0028">Amino-acid biosynthesis</keyword>
<keyword id="KW-0057">Aromatic amino acid biosynthesis</keyword>
<keyword id="KW-0170">Cobalt</keyword>
<keyword id="KW-0963">Cytoplasm</keyword>
<keyword id="KW-0456">Lyase</keyword>
<keyword id="KW-0479">Metal-binding</keyword>
<keyword id="KW-0520">NAD</keyword>
<keyword id="KW-0547">Nucleotide-binding</keyword>
<keyword id="KW-0862">Zinc</keyword>